<organism>
    <name type="scientific">Caenorhabditis briggsae</name>
    <dbReference type="NCBI Taxonomy" id="6238"/>
    <lineage>
        <taxon>Eukaryota</taxon>
        <taxon>Metazoa</taxon>
        <taxon>Ecdysozoa</taxon>
        <taxon>Nematoda</taxon>
        <taxon>Chromadorea</taxon>
        <taxon>Rhabditida</taxon>
        <taxon>Rhabditina</taxon>
        <taxon>Rhabditomorpha</taxon>
        <taxon>Rhabditoidea</taxon>
        <taxon>Rhabditidae</taxon>
        <taxon>Peloderinae</taxon>
        <taxon>Caenorhabditis</taxon>
    </lineage>
</organism>
<gene>
    <name type="ORF">CBG03556</name>
</gene>
<protein>
    <recommendedName>
        <fullName evidence="5">Leishmanolysin-like peptidase</fullName>
        <ecNumber evidence="3">3.4.24.-</ecNumber>
    </recommendedName>
</protein>
<dbReference type="EC" id="3.4.24.-" evidence="3"/>
<dbReference type="EMBL" id="HE601339">
    <property type="protein sequence ID" value="CAP24430.2"/>
    <property type="molecule type" value="Genomic_DNA"/>
</dbReference>
<dbReference type="RefSeq" id="XP_002647039.2">
    <property type="nucleotide sequence ID" value="XM_002646993.2"/>
</dbReference>
<dbReference type="SMR" id="Q61YG1"/>
<dbReference type="FunCoup" id="Q61YG1">
    <property type="interactions" value="1496"/>
</dbReference>
<dbReference type="STRING" id="6238.Q61YG1"/>
<dbReference type="EnsemblMetazoa" id="CBG03556a.1">
    <property type="protein sequence ID" value="CBG03556a.1"/>
    <property type="gene ID" value="WBGene00026399"/>
</dbReference>
<dbReference type="GeneID" id="8589038"/>
<dbReference type="WormBase" id="CBG03556a">
    <property type="protein sequence ID" value="CBP37311"/>
    <property type="gene ID" value="WBGene00026399"/>
</dbReference>
<dbReference type="eggNOG" id="KOG2556">
    <property type="taxonomic scope" value="Eukaryota"/>
</dbReference>
<dbReference type="HOGENOM" id="CLU_023820_1_0_1"/>
<dbReference type="InParanoid" id="Q61YG1"/>
<dbReference type="OMA" id="MVRHHVH"/>
<dbReference type="Proteomes" id="UP000008549">
    <property type="component" value="Unassembled WGS sequence"/>
</dbReference>
<dbReference type="GO" id="GO:0005737">
    <property type="term" value="C:cytoplasm"/>
    <property type="evidence" value="ECO:0000318"/>
    <property type="project" value="GO_Central"/>
</dbReference>
<dbReference type="GO" id="GO:0016020">
    <property type="term" value="C:membrane"/>
    <property type="evidence" value="ECO:0007669"/>
    <property type="project" value="InterPro"/>
</dbReference>
<dbReference type="GO" id="GO:0046872">
    <property type="term" value="F:metal ion binding"/>
    <property type="evidence" value="ECO:0007669"/>
    <property type="project" value="UniProtKB-KW"/>
</dbReference>
<dbReference type="GO" id="GO:0004222">
    <property type="term" value="F:metalloendopeptidase activity"/>
    <property type="evidence" value="ECO:0007669"/>
    <property type="project" value="InterPro"/>
</dbReference>
<dbReference type="GO" id="GO:0008233">
    <property type="term" value="F:peptidase activity"/>
    <property type="evidence" value="ECO:0000318"/>
    <property type="project" value="GO_Central"/>
</dbReference>
<dbReference type="GO" id="GO:0007155">
    <property type="term" value="P:cell adhesion"/>
    <property type="evidence" value="ECO:0007669"/>
    <property type="project" value="InterPro"/>
</dbReference>
<dbReference type="GO" id="GO:0051301">
    <property type="term" value="P:cell division"/>
    <property type="evidence" value="ECO:0007669"/>
    <property type="project" value="UniProtKB-KW"/>
</dbReference>
<dbReference type="GO" id="GO:0006508">
    <property type="term" value="P:proteolysis"/>
    <property type="evidence" value="ECO:0007669"/>
    <property type="project" value="UniProtKB-KW"/>
</dbReference>
<dbReference type="FunFam" id="2.10.55.10:FF:000005">
    <property type="entry name" value="Leishmanolysin-like peptidase"/>
    <property type="match status" value="1"/>
</dbReference>
<dbReference type="FunFam" id="2.30.34.10:FF:000002">
    <property type="entry name" value="Leishmanolysin-like peptidase"/>
    <property type="match status" value="1"/>
</dbReference>
<dbReference type="FunFam" id="3.10.170.20:FF:000007">
    <property type="entry name" value="Leishmanolysin-like peptidase"/>
    <property type="match status" value="1"/>
</dbReference>
<dbReference type="FunFam" id="3.90.132.10:FF:000001">
    <property type="entry name" value="leishmanolysin-like peptidase isoform X2"/>
    <property type="match status" value="1"/>
</dbReference>
<dbReference type="Gene3D" id="3.10.170.20">
    <property type="match status" value="1"/>
</dbReference>
<dbReference type="Gene3D" id="3.90.132.10">
    <property type="entry name" value="Leishmanolysin , domain 2"/>
    <property type="match status" value="1"/>
</dbReference>
<dbReference type="Gene3D" id="2.10.55.10">
    <property type="entry name" value="Leishmanolysin domain 3"/>
    <property type="match status" value="1"/>
</dbReference>
<dbReference type="Gene3D" id="2.30.34.10">
    <property type="entry name" value="Leishmanolysin domain 4"/>
    <property type="match status" value="1"/>
</dbReference>
<dbReference type="InterPro" id="IPR001577">
    <property type="entry name" value="Peptidase_M8"/>
</dbReference>
<dbReference type="PANTHER" id="PTHR10942">
    <property type="entry name" value="LEISHMANOLYSIN-LIKE PEPTIDASE"/>
    <property type="match status" value="1"/>
</dbReference>
<dbReference type="PANTHER" id="PTHR10942:SF0">
    <property type="entry name" value="LEISHMANOLYSIN-LIKE PEPTIDASE"/>
    <property type="match status" value="1"/>
</dbReference>
<dbReference type="Pfam" id="PF01457">
    <property type="entry name" value="Peptidase_M8"/>
    <property type="match status" value="1"/>
</dbReference>
<dbReference type="SUPFAM" id="SSF55486">
    <property type="entry name" value="Metalloproteases ('zincins'), catalytic domain"/>
    <property type="match status" value="1"/>
</dbReference>
<reference key="1">
    <citation type="journal article" date="2003" name="PLoS Biol.">
        <title>The genome sequence of Caenorhabditis briggsae: a platform for comparative genomics.</title>
        <authorList>
            <person name="Stein L.D."/>
            <person name="Bao Z."/>
            <person name="Blasiar D."/>
            <person name="Blumenthal T."/>
            <person name="Brent M.R."/>
            <person name="Chen N."/>
            <person name="Chinwalla A."/>
            <person name="Clarke L."/>
            <person name="Clee C."/>
            <person name="Coghlan A."/>
            <person name="Coulson A."/>
            <person name="D'Eustachio P."/>
            <person name="Fitch D.H.A."/>
            <person name="Fulton L.A."/>
            <person name="Fulton R.E."/>
            <person name="Griffiths-Jones S."/>
            <person name="Harris T.W."/>
            <person name="Hillier L.W."/>
            <person name="Kamath R."/>
            <person name="Kuwabara P.E."/>
            <person name="Mardis E.R."/>
            <person name="Marra M.A."/>
            <person name="Miner T.L."/>
            <person name="Minx P."/>
            <person name="Mullikin J.C."/>
            <person name="Plumb R.W."/>
            <person name="Rogers J."/>
            <person name="Schein J.E."/>
            <person name="Sohrmann M."/>
            <person name="Spieth J."/>
            <person name="Stajich J.E."/>
            <person name="Wei C."/>
            <person name="Willey D."/>
            <person name="Wilson R.K."/>
            <person name="Durbin R.M."/>
            <person name="Waterston R.H."/>
        </authorList>
    </citation>
    <scope>NUCLEOTIDE SEQUENCE [LARGE SCALE GENOMIC DNA]</scope>
    <source>
        <strain>AF16</strain>
    </source>
</reference>
<keyword id="KW-0131">Cell cycle</keyword>
<keyword id="KW-0132">Cell division</keyword>
<keyword id="KW-0963">Cytoplasm</keyword>
<keyword id="KW-0378">Hydrolase</keyword>
<keyword id="KW-0479">Metal-binding</keyword>
<keyword id="KW-0482">Metalloprotease</keyword>
<keyword id="KW-0498">Mitosis</keyword>
<keyword id="KW-0645">Protease</keyword>
<keyword id="KW-1185">Reference proteome</keyword>
<keyword id="KW-0862">Zinc</keyword>
<evidence type="ECO:0000250" key="1"/>
<evidence type="ECO:0000250" key="2">
    <source>
        <dbReference type="UniProtKB" id="P08148"/>
    </source>
</evidence>
<evidence type="ECO:0000250" key="3">
    <source>
        <dbReference type="UniProtKB" id="Q9VH19"/>
    </source>
</evidence>
<evidence type="ECO:0000255" key="4">
    <source>
        <dbReference type="PROSITE-ProRule" id="PRU10095"/>
    </source>
</evidence>
<evidence type="ECO:0000305" key="5"/>
<accession>Q61YG1</accession>
<accession>A8WVB9</accession>
<feature type="chain" id="PRO_0000303078" description="Leishmanolysin-like peptidase">
    <location>
        <begin position="1"/>
        <end position="663"/>
    </location>
</feature>
<feature type="active site" evidence="4">
    <location>
        <position position="247"/>
    </location>
</feature>
<feature type="binding site" evidence="4">
    <location>
        <position position="246"/>
    </location>
    <ligand>
        <name>Zn(2+)</name>
        <dbReference type="ChEBI" id="CHEBI:29105"/>
        <note>catalytic</note>
    </ligand>
</feature>
<feature type="binding site" evidence="4">
    <location>
        <position position="250"/>
    </location>
    <ligand>
        <name>Zn(2+)</name>
        <dbReference type="ChEBI" id="CHEBI:29105"/>
        <note>catalytic</note>
    </ligand>
</feature>
<feature type="binding site" evidence="4">
    <location>
        <position position="353"/>
    </location>
    <ligand>
        <name>Zn(2+)</name>
        <dbReference type="ChEBI" id="CHEBI:29105"/>
        <note>catalytic</note>
    </ligand>
</feature>
<comment type="function">
    <text evidence="3">Metalloprotease.</text>
</comment>
<comment type="cofactor">
    <cofactor evidence="2">
        <name>Zn(2+)</name>
        <dbReference type="ChEBI" id="CHEBI:29105"/>
    </cofactor>
    <text evidence="2">Binds 1 zinc ion per subunit.</text>
</comment>
<comment type="subcellular location">
    <subcellularLocation>
        <location>Cytoplasm</location>
    </subcellularLocation>
    <text evidence="1">Found in ring-like structures resembling invadopodia. In migrating cells it relocalizes from internal structures to the leading edge of cells (By similarity).</text>
</comment>
<comment type="similarity">
    <text evidence="5">Belongs to the peptidase M8 family.</text>
</comment>
<name>LMLN_CAEBR</name>
<proteinExistence type="inferred from homology"/>
<sequence length="663" mass="76389">MKPRLIFQYFAYSFLVFLPFINTLPCSYQNPRIEDVLLEVPIEHHHPHRHRRDSENPTETPPDLQKFAPLRIQLHYDKSIQNLTAEVQHFVNTTLLPEAVGYWENALRVRPMKTPIRLRRKCISSFYYYKQGMRNVACDKGCRERTTCGEADIPNDHLLDCLACNNTDDCQTTGEMGEGVKESDFILYVTAHNSKRCEGPETLSYAAHCQQEADFDRPIAGNVNLCPSALSVHNHDYEILTSTVKHEILHALGFSVGLYAFFRDKDGKPRTKRNRYGRPTSLNKQRGYYDWDKNTITTVLREEWWTGEGKVIHPIQMMVTPKVREEARRHFGCDKLEGAELENQGGEGTVLTHWEKRAYENEAMTGTHTQNPVYSRLTLAFLEDTGWYQPNYEVAEDLHWGKQLGCDFAMKSCGEWIHQKRILGEDAYPYCSDIKHDGTKSMAITRCTSQRDSLALCNLIPFQKELPPQYRNFMSLPGVNPDGAKYYGGSVEMADYCPFLQEFEWKMPEKEHKDSRCELEGNGKEGEDILEVYGENSKCFEFPKPWTERKCGRIRVLSHYMAGCYEYQCTNGTLYVGSYNATDMYPCYAENQKVHIKKVVDGWLREGSLICPKCSDYCSSCGPPIVIPDYIGDPELDEPCFAFSKFSVFGLFSCYLAILYIRF</sequence>